<name>TYW5_HUMAN</name>
<dbReference type="EC" id="1.14.11.42" evidence="2 3"/>
<dbReference type="EMBL" id="AK095272">
    <property type="protein sequence ID" value="BAC04517.1"/>
    <property type="molecule type" value="mRNA"/>
</dbReference>
<dbReference type="EMBL" id="AK298977">
    <property type="protein sequence ID" value="BAG61071.1"/>
    <property type="molecule type" value="mRNA"/>
</dbReference>
<dbReference type="EMBL" id="AC097717">
    <property type="protein sequence ID" value="AAY24162.1"/>
    <property type="molecule type" value="Genomic_DNA"/>
</dbReference>
<dbReference type="EMBL" id="CH471063">
    <property type="protein sequence ID" value="EAW70191.1"/>
    <property type="molecule type" value="Genomic_DNA"/>
</dbReference>
<dbReference type="EMBL" id="BC063502">
    <property type="protein sequence ID" value="AAH63502.1"/>
    <property type="status" value="ALT_INIT"/>
    <property type="molecule type" value="mRNA"/>
</dbReference>
<dbReference type="EMBL" id="BC132835">
    <property type="protein sequence ID" value="AAI32836.1"/>
    <property type="molecule type" value="mRNA"/>
</dbReference>
<dbReference type="EMBL" id="BC136837">
    <property type="protein sequence ID" value="AAI36838.1"/>
    <property type="molecule type" value="mRNA"/>
</dbReference>
<dbReference type="CCDS" id="CCDS42795.1">
    <molecule id="A2RUC4-1"/>
</dbReference>
<dbReference type="RefSeq" id="NP_001034782.1">
    <molecule id="A2RUC4-1"/>
    <property type="nucleotide sequence ID" value="NM_001039693.3"/>
</dbReference>
<dbReference type="PDB" id="3AL5">
    <property type="method" value="X-ray"/>
    <property type="resolution" value="2.50 A"/>
    <property type="chains" value="A/B/C/D=1-315"/>
</dbReference>
<dbReference type="PDB" id="3AL6">
    <property type="method" value="X-ray"/>
    <property type="resolution" value="2.80 A"/>
    <property type="chains" value="A/B/C/D=1-315"/>
</dbReference>
<dbReference type="PDBsum" id="3AL5"/>
<dbReference type="PDBsum" id="3AL6"/>
<dbReference type="SMR" id="A2RUC4"/>
<dbReference type="BioGRID" id="126193">
    <property type="interactions" value="15"/>
</dbReference>
<dbReference type="FunCoup" id="A2RUC4">
    <property type="interactions" value="1165"/>
</dbReference>
<dbReference type="IntAct" id="A2RUC4">
    <property type="interactions" value="11"/>
</dbReference>
<dbReference type="STRING" id="9606.ENSP00000346627"/>
<dbReference type="iPTMnet" id="A2RUC4"/>
<dbReference type="PhosphoSitePlus" id="A2RUC4"/>
<dbReference type="BioMuta" id="TYW5"/>
<dbReference type="jPOST" id="A2RUC4"/>
<dbReference type="MassIVE" id="A2RUC4"/>
<dbReference type="PaxDb" id="9606-ENSP00000346627"/>
<dbReference type="PeptideAtlas" id="A2RUC4"/>
<dbReference type="ProteomicsDB" id="511">
    <molecule id="A2RUC4-1"/>
</dbReference>
<dbReference type="ProteomicsDB" id="512">
    <molecule id="A2RUC4-2"/>
</dbReference>
<dbReference type="Pumba" id="A2RUC4"/>
<dbReference type="Antibodypedia" id="34079">
    <property type="antibodies" value="82 antibodies from 18 providers"/>
</dbReference>
<dbReference type="DNASU" id="129450"/>
<dbReference type="Ensembl" id="ENST00000354611.9">
    <molecule id="A2RUC4-1"/>
    <property type="protein sequence ID" value="ENSP00000346627.4"/>
    <property type="gene ID" value="ENSG00000162971.11"/>
</dbReference>
<dbReference type="GeneID" id="129450"/>
<dbReference type="KEGG" id="hsa:129450"/>
<dbReference type="MANE-Select" id="ENST00000354611.9">
    <property type="protein sequence ID" value="ENSP00000346627.4"/>
    <property type="RefSeq nucleotide sequence ID" value="NM_001039693.3"/>
    <property type="RefSeq protein sequence ID" value="NP_001034782.1"/>
</dbReference>
<dbReference type="UCSC" id="uc002uvi.5">
    <molecule id="A2RUC4-1"/>
    <property type="organism name" value="human"/>
</dbReference>
<dbReference type="AGR" id="HGNC:26754"/>
<dbReference type="CTD" id="129450"/>
<dbReference type="DisGeNET" id="129450"/>
<dbReference type="GeneCards" id="TYW5"/>
<dbReference type="HGNC" id="HGNC:26754">
    <property type="gene designation" value="TYW5"/>
</dbReference>
<dbReference type="HPA" id="ENSG00000162971">
    <property type="expression patterns" value="Low tissue specificity"/>
</dbReference>
<dbReference type="MIM" id="619882">
    <property type="type" value="gene"/>
</dbReference>
<dbReference type="neXtProt" id="NX_A2RUC4"/>
<dbReference type="OpenTargets" id="ENSG00000162971"/>
<dbReference type="PharmGKB" id="PA162379298"/>
<dbReference type="VEuPathDB" id="HostDB:ENSG00000162971"/>
<dbReference type="eggNOG" id="KOG2132">
    <property type="taxonomic scope" value="Eukaryota"/>
</dbReference>
<dbReference type="GeneTree" id="ENSGT00940000158493"/>
<dbReference type="HOGENOM" id="CLU_016785_4_0_1"/>
<dbReference type="InParanoid" id="A2RUC4"/>
<dbReference type="OMA" id="LYDDRPV"/>
<dbReference type="OrthoDB" id="263283at2759"/>
<dbReference type="PAN-GO" id="A2RUC4">
    <property type="GO annotations" value="3 GO annotations based on evolutionary models"/>
</dbReference>
<dbReference type="PhylomeDB" id="A2RUC4"/>
<dbReference type="TreeFam" id="TF332364"/>
<dbReference type="BioCyc" id="MetaCyc:ENSG00000162971-MONOMER"/>
<dbReference type="BRENDA" id="1.14.11.42">
    <property type="organism ID" value="2681"/>
</dbReference>
<dbReference type="PathwayCommons" id="A2RUC4"/>
<dbReference type="Reactome" id="R-HSA-6782861">
    <property type="pathway name" value="Synthesis of wybutosine at G37 of tRNA(Phe)"/>
</dbReference>
<dbReference type="SignaLink" id="A2RUC4"/>
<dbReference type="UniPathway" id="UPA00375"/>
<dbReference type="BioGRID-ORCS" id="129450">
    <property type="hits" value="9 hits in 1155 CRISPR screens"/>
</dbReference>
<dbReference type="EvolutionaryTrace" id="A2RUC4"/>
<dbReference type="GenomeRNAi" id="129450"/>
<dbReference type="Pharos" id="A2RUC4">
    <property type="development level" value="Tbio"/>
</dbReference>
<dbReference type="PRO" id="PR:A2RUC4"/>
<dbReference type="Proteomes" id="UP000005640">
    <property type="component" value="Chromosome 2"/>
</dbReference>
<dbReference type="RNAct" id="A2RUC4">
    <property type="molecule type" value="protein"/>
</dbReference>
<dbReference type="Bgee" id="ENSG00000162971">
    <property type="expression patterns" value="Expressed in epithelial cell of pancreas and 140 other cell types or tissues"/>
</dbReference>
<dbReference type="ExpressionAtlas" id="A2RUC4">
    <property type="expression patterns" value="baseline and differential"/>
</dbReference>
<dbReference type="GO" id="GO:0005737">
    <property type="term" value="C:cytoplasm"/>
    <property type="evidence" value="ECO:0000304"/>
    <property type="project" value="Reactome"/>
</dbReference>
<dbReference type="GO" id="GO:0005506">
    <property type="term" value="F:iron ion binding"/>
    <property type="evidence" value="ECO:0000314"/>
    <property type="project" value="UniProtKB"/>
</dbReference>
<dbReference type="GO" id="GO:0042803">
    <property type="term" value="F:protein homodimerization activity"/>
    <property type="evidence" value="ECO:0000314"/>
    <property type="project" value="UniProtKB"/>
</dbReference>
<dbReference type="GO" id="GO:0000049">
    <property type="term" value="F:tRNA binding"/>
    <property type="evidence" value="ECO:0000314"/>
    <property type="project" value="UniProtKB"/>
</dbReference>
<dbReference type="GO" id="GO:0102524">
    <property type="term" value="F:tRNA(Phe) (7-(3-amino-3-carboxypropyl)wyosine37-C2)-hydroxylase activity"/>
    <property type="evidence" value="ECO:0000314"/>
    <property type="project" value="UniProtKB"/>
</dbReference>
<dbReference type="GO" id="GO:0031591">
    <property type="term" value="P:wybutosine biosynthetic process"/>
    <property type="evidence" value="ECO:0000314"/>
    <property type="project" value="UniProtKB"/>
</dbReference>
<dbReference type="FunFam" id="2.60.120.650:FF:000022">
    <property type="entry name" value="tRNA wybutosine-synthesizing protein 5"/>
    <property type="match status" value="1"/>
</dbReference>
<dbReference type="Gene3D" id="6.10.140.1470">
    <property type="match status" value="1"/>
</dbReference>
<dbReference type="Gene3D" id="2.60.120.650">
    <property type="entry name" value="Cupin"/>
    <property type="match status" value="1"/>
</dbReference>
<dbReference type="InterPro" id="IPR041667">
    <property type="entry name" value="Cupin_8"/>
</dbReference>
<dbReference type="InterPro" id="IPR003347">
    <property type="entry name" value="JmjC_dom"/>
</dbReference>
<dbReference type="PANTHER" id="PTHR12461">
    <property type="entry name" value="HYPOXIA-INDUCIBLE FACTOR 1 ALPHA INHIBITOR-RELATED"/>
    <property type="match status" value="1"/>
</dbReference>
<dbReference type="PANTHER" id="PTHR12461:SF104">
    <property type="entry name" value="TRNA WYBUTOSINE-SYNTHESIZING PROTEIN 5"/>
    <property type="match status" value="1"/>
</dbReference>
<dbReference type="Pfam" id="PF13621">
    <property type="entry name" value="Cupin_8"/>
    <property type="match status" value="1"/>
</dbReference>
<dbReference type="SMART" id="SM00558">
    <property type="entry name" value="JmjC"/>
    <property type="match status" value="1"/>
</dbReference>
<dbReference type="SUPFAM" id="SSF51197">
    <property type="entry name" value="Clavaminate synthase-like"/>
    <property type="match status" value="1"/>
</dbReference>
<dbReference type="PROSITE" id="PS51184">
    <property type="entry name" value="JMJC"/>
    <property type="match status" value="1"/>
</dbReference>
<proteinExistence type="evidence at protein level"/>
<sequence length="315" mass="36548">MAGQHLPVPRLEGVSREQFMQHLYPQRKPLVLEGIDLGPCTSKWTVDYLSQVGGKKEVKIHVAAVAQMDFISKNFVYRTLPFDQLVQRAAEEKHKEFFVSEDEKYYLRSLGEDPRKDVADIRKQFPLLKGDIKFPEFFKEEQFFSSVFRISSPGLQLWTHYDVMDNLLIQVTGKKRVVLFSPRDAQYLYLKGTKSEVLNIDNPDLAKYPLFSKARRYECSLEAGDVLFIPALWFHNVISEEFGVGVNIFWKHLPSECYDKTDTYGNKDPTAASRAAQILDRALKTLAELPEEYRDFYARRMVLHIQDKAYSKNSE</sequence>
<feature type="chain" id="PRO_0000309274" description="tRNA wybutosine-synthesizing protein 5">
    <location>
        <begin position="1"/>
        <end position="315"/>
    </location>
</feature>
<feature type="domain" description="JmjC" evidence="1">
    <location>
        <begin position="102"/>
        <end position="267"/>
    </location>
</feature>
<feature type="binding site" evidence="3">
    <location>
        <position position="106"/>
    </location>
    <ligand>
        <name>2-oxoglutarate</name>
        <dbReference type="ChEBI" id="CHEBI:16810"/>
    </ligand>
</feature>
<feature type="binding site">
    <location>
        <position position="160"/>
    </location>
    <ligand>
        <name>Fe cation</name>
        <dbReference type="ChEBI" id="CHEBI:24875"/>
        <note>catalytic</note>
    </ligand>
</feature>
<feature type="binding site">
    <location>
        <position position="162"/>
    </location>
    <ligand>
        <name>Fe cation</name>
        <dbReference type="ChEBI" id="CHEBI:24875"/>
        <note>catalytic</note>
    </ligand>
</feature>
<feature type="binding site" evidence="3">
    <location>
        <position position="166"/>
    </location>
    <ligand>
        <name>2-oxoglutarate</name>
        <dbReference type="ChEBI" id="CHEBI:16810"/>
    </ligand>
</feature>
<feature type="binding site" evidence="3">
    <location>
        <position position="175"/>
    </location>
    <ligand>
        <name>2-oxoglutarate</name>
        <dbReference type="ChEBI" id="CHEBI:16810"/>
    </ligand>
</feature>
<feature type="binding site">
    <location>
        <position position="235"/>
    </location>
    <ligand>
        <name>Fe cation</name>
        <dbReference type="ChEBI" id="CHEBI:24875"/>
        <note>catalytic</note>
    </ligand>
</feature>
<feature type="splice variant" id="VSP_029106" description="In isoform 2." evidence="4">
    <location>
        <begin position="1"/>
        <end position="163"/>
    </location>
</feature>
<feature type="sequence variant" id="VAR_036926" description="In dbSNP:rs10497844.">
    <original>S</original>
    <variation>G</variation>
    <location>
        <position position="50"/>
    </location>
</feature>
<feature type="mutagenesis site" description="Abolishes enzyme activity and ability to bind tRNA." evidence="3">
    <original>R</original>
    <variation>A</variation>
    <location>
        <position position="108"/>
    </location>
</feature>
<feature type="mutagenesis site" description="Abolishes enzyme activity and ability to bind tRNA." evidence="3">
    <original>R</original>
    <variation>A</variation>
    <location>
        <position position="149"/>
    </location>
</feature>
<feature type="strand" evidence="7">
    <location>
        <begin position="10"/>
        <end position="13"/>
    </location>
</feature>
<feature type="helix" evidence="7">
    <location>
        <begin position="16"/>
        <end position="22"/>
    </location>
</feature>
<feature type="helix" evidence="7">
    <location>
        <begin position="24"/>
        <end position="26"/>
    </location>
</feature>
<feature type="strand" evidence="7">
    <location>
        <begin position="30"/>
        <end position="34"/>
    </location>
</feature>
<feature type="helix" evidence="7">
    <location>
        <begin position="40"/>
        <end position="43"/>
    </location>
</feature>
<feature type="helix" evidence="7">
    <location>
        <begin position="46"/>
        <end position="53"/>
    </location>
</feature>
<feature type="strand" evidence="7">
    <location>
        <begin position="57"/>
        <end position="66"/>
    </location>
</feature>
<feature type="turn" evidence="8">
    <location>
        <begin position="70"/>
        <end position="72"/>
    </location>
</feature>
<feature type="strand" evidence="7">
    <location>
        <begin position="76"/>
        <end position="81"/>
    </location>
</feature>
<feature type="helix" evidence="7">
    <location>
        <begin position="82"/>
        <end position="90"/>
    </location>
</feature>
<feature type="strand" evidence="7">
    <location>
        <begin position="106"/>
        <end position="108"/>
    </location>
</feature>
<feature type="turn" evidence="7">
    <location>
        <begin position="114"/>
        <end position="116"/>
    </location>
</feature>
<feature type="helix" evidence="7">
    <location>
        <begin position="121"/>
        <end position="124"/>
    </location>
</feature>
<feature type="helix" evidence="7">
    <location>
        <begin position="126"/>
        <end position="129"/>
    </location>
</feature>
<feature type="helix" evidence="7">
    <location>
        <begin position="140"/>
        <end position="142"/>
    </location>
</feature>
<feature type="strand" evidence="7">
    <location>
        <begin position="143"/>
        <end position="151"/>
    </location>
</feature>
<feature type="strand" evidence="7">
    <location>
        <begin position="156"/>
        <end position="160"/>
    </location>
</feature>
<feature type="strand" evidence="7">
    <location>
        <begin position="163"/>
        <end position="170"/>
    </location>
</feature>
<feature type="strand" evidence="7">
    <location>
        <begin position="175"/>
        <end position="180"/>
    </location>
</feature>
<feature type="helix" evidence="7">
    <location>
        <begin position="182"/>
        <end position="188"/>
    </location>
</feature>
<feature type="strand" evidence="7">
    <location>
        <begin position="194"/>
        <end position="196"/>
    </location>
</feature>
<feature type="strand" evidence="7">
    <location>
        <begin position="200"/>
        <end position="202"/>
    </location>
</feature>
<feature type="turn" evidence="7">
    <location>
        <begin position="205"/>
        <end position="207"/>
    </location>
</feature>
<feature type="helix" evidence="7">
    <location>
        <begin position="211"/>
        <end position="213"/>
    </location>
</feature>
<feature type="strand" evidence="7">
    <location>
        <begin position="216"/>
        <end position="221"/>
    </location>
</feature>
<feature type="strand" evidence="7">
    <location>
        <begin position="226"/>
        <end position="229"/>
    </location>
</feature>
<feature type="strand" evidence="7">
    <location>
        <begin position="234"/>
        <end position="241"/>
    </location>
</feature>
<feature type="strand" evidence="7">
    <location>
        <begin position="243"/>
        <end position="250"/>
    </location>
</feature>
<feature type="helix" evidence="7">
    <location>
        <begin position="255"/>
        <end position="257"/>
    </location>
</feature>
<feature type="strand" evidence="7">
    <location>
        <begin position="263"/>
        <end position="265"/>
    </location>
</feature>
<feature type="helix" evidence="7">
    <location>
        <begin position="270"/>
        <end position="286"/>
    </location>
</feature>
<feature type="helix" evidence="7">
    <location>
        <begin position="291"/>
        <end position="308"/>
    </location>
</feature>
<gene>
    <name type="primary">TYW5</name>
    <name type="synonym">C2orf60</name>
</gene>
<reference key="1">
    <citation type="journal article" date="2004" name="Nat. Genet.">
        <title>Complete sequencing and characterization of 21,243 full-length human cDNAs.</title>
        <authorList>
            <person name="Ota T."/>
            <person name="Suzuki Y."/>
            <person name="Nishikawa T."/>
            <person name="Otsuki T."/>
            <person name="Sugiyama T."/>
            <person name="Irie R."/>
            <person name="Wakamatsu A."/>
            <person name="Hayashi K."/>
            <person name="Sato H."/>
            <person name="Nagai K."/>
            <person name="Kimura K."/>
            <person name="Makita H."/>
            <person name="Sekine M."/>
            <person name="Obayashi M."/>
            <person name="Nishi T."/>
            <person name="Shibahara T."/>
            <person name="Tanaka T."/>
            <person name="Ishii S."/>
            <person name="Yamamoto J."/>
            <person name="Saito K."/>
            <person name="Kawai Y."/>
            <person name="Isono Y."/>
            <person name="Nakamura Y."/>
            <person name="Nagahari K."/>
            <person name="Murakami K."/>
            <person name="Yasuda T."/>
            <person name="Iwayanagi T."/>
            <person name="Wagatsuma M."/>
            <person name="Shiratori A."/>
            <person name="Sudo H."/>
            <person name="Hosoiri T."/>
            <person name="Kaku Y."/>
            <person name="Kodaira H."/>
            <person name="Kondo H."/>
            <person name="Sugawara M."/>
            <person name="Takahashi M."/>
            <person name="Kanda K."/>
            <person name="Yokoi T."/>
            <person name="Furuya T."/>
            <person name="Kikkawa E."/>
            <person name="Omura Y."/>
            <person name="Abe K."/>
            <person name="Kamihara K."/>
            <person name="Katsuta N."/>
            <person name="Sato K."/>
            <person name="Tanikawa M."/>
            <person name="Yamazaki M."/>
            <person name="Ninomiya K."/>
            <person name="Ishibashi T."/>
            <person name="Yamashita H."/>
            <person name="Murakawa K."/>
            <person name="Fujimori K."/>
            <person name="Tanai H."/>
            <person name="Kimata M."/>
            <person name="Watanabe M."/>
            <person name="Hiraoka S."/>
            <person name="Chiba Y."/>
            <person name="Ishida S."/>
            <person name="Ono Y."/>
            <person name="Takiguchi S."/>
            <person name="Watanabe S."/>
            <person name="Yosida M."/>
            <person name="Hotuta T."/>
            <person name="Kusano J."/>
            <person name="Kanehori K."/>
            <person name="Takahashi-Fujii A."/>
            <person name="Hara H."/>
            <person name="Tanase T.-O."/>
            <person name="Nomura Y."/>
            <person name="Togiya S."/>
            <person name="Komai F."/>
            <person name="Hara R."/>
            <person name="Takeuchi K."/>
            <person name="Arita M."/>
            <person name="Imose N."/>
            <person name="Musashino K."/>
            <person name="Yuuki H."/>
            <person name="Oshima A."/>
            <person name="Sasaki N."/>
            <person name="Aotsuka S."/>
            <person name="Yoshikawa Y."/>
            <person name="Matsunawa H."/>
            <person name="Ichihara T."/>
            <person name="Shiohata N."/>
            <person name="Sano S."/>
            <person name="Moriya S."/>
            <person name="Momiyama H."/>
            <person name="Satoh N."/>
            <person name="Takami S."/>
            <person name="Terashima Y."/>
            <person name="Suzuki O."/>
            <person name="Nakagawa S."/>
            <person name="Senoh A."/>
            <person name="Mizoguchi H."/>
            <person name="Goto Y."/>
            <person name="Shimizu F."/>
            <person name="Wakebe H."/>
            <person name="Hishigaki H."/>
            <person name="Watanabe T."/>
            <person name="Sugiyama A."/>
            <person name="Takemoto M."/>
            <person name="Kawakami B."/>
            <person name="Yamazaki M."/>
            <person name="Watanabe K."/>
            <person name="Kumagai A."/>
            <person name="Itakura S."/>
            <person name="Fukuzumi Y."/>
            <person name="Fujimori Y."/>
            <person name="Komiyama M."/>
            <person name="Tashiro H."/>
            <person name="Tanigami A."/>
            <person name="Fujiwara T."/>
            <person name="Ono T."/>
            <person name="Yamada K."/>
            <person name="Fujii Y."/>
            <person name="Ozaki K."/>
            <person name="Hirao M."/>
            <person name="Ohmori Y."/>
            <person name="Kawabata A."/>
            <person name="Hikiji T."/>
            <person name="Kobatake N."/>
            <person name="Inagaki H."/>
            <person name="Ikema Y."/>
            <person name="Okamoto S."/>
            <person name="Okitani R."/>
            <person name="Kawakami T."/>
            <person name="Noguchi S."/>
            <person name="Itoh T."/>
            <person name="Shigeta K."/>
            <person name="Senba T."/>
            <person name="Matsumura K."/>
            <person name="Nakajima Y."/>
            <person name="Mizuno T."/>
            <person name="Morinaga M."/>
            <person name="Sasaki M."/>
            <person name="Togashi T."/>
            <person name="Oyama M."/>
            <person name="Hata H."/>
            <person name="Watanabe M."/>
            <person name="Komatsu T."/>
            <person name="Mizushima-Sugano J."/>
            <person name="Satoh T."/>
            <person name="Shirai Y."/>
            <person name="Takahashi Y."/>
            <person name="Nakagawa K."/>
            <person name="Okumura K."/>
            <person name="Nagase T."/>
            <person name="Nomura N."/>
            <person name="Kikuchi H."/>
            <person name="Masuho Y."/>
            <person name="Yamashita R."/>
            <person name="Nakai K."/>
            <person name="Yada T."/>
            <person name="Nakamura Y."/>
            <person name="Ohara O."/>
            <person name="Isogai T."/>
            <person name="Sugano S."/>
        </authorList>
    </citation>
    <scope>NUCLEOTIDE SEQUENCE [LARGE SCALE MRNA] (ISOFORMS 1 AND 2)</scope>
    <source>
        <tissue>Tongue</tissue>
    </source>
</reference>
<reference key="2">
    <citation type="journal article" date="2005" name="Nature">
        <title>Generation and annotation of the DNA sequences of human chromosomes 2 and 4.</title>
        <authorList>
            <person name="Hillier L.W."/>
            <person name="Graves T.A."/>
            <person name="Fulton R.S."/>
            <person name="Fulton L.A."/>
            <person name="Pepin K.H."/>
            <person name="Minx P."/>
            <person name="Wagner-McPherson C."/>
            <person name="Layman D."/>
            <person name="Wylie K."/>
            <person name="Sekhon M."/>
            <person name="Becker M.C."/>
            <person name="Fewell G.A."/>
            <person name="Delehaunty K.D."/>
            <person name="Miner T.L."/>
            <person name="Nash W.E."/>
            <person name="Kremitzki C."/>
            <person name="Oddy L."/>
            <person name="Du H."/>
            <person name="Sun H."/>
            <person name="Bradshaw-Cordum H."/>
            <person name="Ali J."/>
            <person name="Carter J."/>
            <person name="Cordes M."/>
            <person name="Harris A."/>
            <person name="Isak A."/>
            <person name="van Brunt A."/>
            <person name="Nguyen C."/>
            <person name="Du F."/>
            <person name="Courtney L."/>
            <person name="Kalicki J."/>
            <person name="Ozersky P."/>
            <person name="Abbott S."/>
            <person name="Armstrong J."/>
            <person name="Belter E.A."/>
            <person name="Caruso L."/>
            <person name="Cedroni M."/>
            <person name="Cotton M."/>
            <person name="Davidson T."/>
            <person name="Desai A."/>
            <person name="Elliott G."/>
            <person name="Erb T."/>
            <person name="Fronick C."/>
            <person name="Gaige T."/>
            <person name="Haakenson W."/>
            <person name="Haglund K."/>
            <person name="Holmes A."/>
            <person name="Harkins R."/>
            <person name="Kim K."/>
            <person name="Kruchowski S.S."/>
            <person name="Strong C.M."/>
            <person name="Grewal N."/>
            <person name="Goyea E."/>
            <person name="Hou S."/>
            <person name="Levy A."/>
            <person name="Martinka S."/>
            <person name="Mead K."/>
            <person name="McLellan M.D."/>
            <person name="Meyer R."/>
            <person name="Randall-Maher J."/>
            <person name="Tomlinson C."/>
            <person name="Dauphin-Kohlberg S."/>
            <person name="Kozlowicz-Reilly A."/>
            <person name="Shah N."/>
            <person name="Swearengen-Shahid S."/>
            <person name="Snider J."/>
            <person name="Strong J.T."/>
            <person name="Thompson J."/>
            <person name="Yoakum M."/>
            <person name="Leonard S."/>
            <person name="Pearman C."/>
            <person name="Trani L."/>
            <person name="Radionenko M."/>
            <person name="Waligorski J.E."/>
            <person name="Wang C."/>
            <person name="Rock S.M."/>
            <person name="Tin-Wollam A.-M."/>
            <person name="Maupin R."/>
            <person name="Latreille P."/>
            <person name="Wendl M.C."/>
            <person name="Yang S.-P."/>
            <person name="Pohl C."/>
            <person name="Wallis J.W."/>
            <person name="Spieth J."/>
            <person name="Bieri T.A."/>
            <person name="Berkowicz N."/>
            <person name="Nelson J.O."/>
            <person name="Osborne J."/>
            <person name="Ding L."/>
            <person name="Meyer R."/>
            <person name="Sabo A."/>
            <person name="Shotland Y."/>
            <person name="Sinha P."/>
            <person name="Wohldmann P.E."/>
            <person name="Cook L.L."/>
            <person name="Hickenbotham M.T."/>
            <person name="Eldred J."/>
            <person name="Williams D."/>
            <person name="Jones T.A."/>
            <person name="She X."/>
            <person name="Ciccarelli F.D."/>
            <person name="Izaurralde E."/>
            <person name="Taylor J."/>
            <person name="Schmutz J."/>
            <person name="Myers R.M."/>
            <person name="Cox D.R."/>
            <person name="Huang X."/>
            <person name="McPherson J.D."/>
            <person name="Mardis E.R."/>
            <person name="Clifton S.W."/>
            <person name="Warren W.C."/>
            <person name="Chinwalla A.T."/>
            <person name="Eddy S.R."/>
            <person name="Marra M.A."/>
            <person name="Ovcharenko I."/>
            <person name="Furey T.S."/>
            <person name="Miller W."/>
            <person name="Eichler E.E."/>
            <person name="Bork P."/>
            <person name="Suyama M."/>
            <person name="Torrents D."/>
            <person name="Waterston R.H."/>
            <person name="Wilson R.K."/>
        </authorList>
    </citation>
    <scope>NUCLEOTIDE SEQUENCE [LARGE SCALE GENOMIC DNA]</scope>
</reference>
<reference key="3">
    <citation type="submission" date="2005-07" db="EMBL/GenBank/DDBJ databases">
        <authorList>
            <person name="Mural R.J."/>
            <person name="Istrail S."/>
            <person name="Sutton G.G."/>
            <person name="Florea L."/>
            <person name="Halpern A.L."/>
            <person name="Mobarry C.M."/>
            <person name="Lippert R."/>
            <person name="Walenz B."/>
            <person name="Shatkay H."/>
            <person name="Dew I."/>
            <person name="Miller J.R."/>
            <person name="Flanigan M.J."/>
            <person name="Edwards N.J."/>
            <person name="Bolanos R."/>
            <person name="Fasulo D."/>
            <person name="Halldorsson B.V."/>
            <person name="Hannenhalli S."/>
            <person name="Turner R."/>
            <person name="Yooseph S."/>
            <person name="Lu F."/>
            <person name="Nusskern D.R."/>
            <person name="Shue B.C."/>
            <person name="Zheng X.H."/>
            <person name="Zhong F."/>
            <person name="Delcher A.L."/>
            <person name="Huson D.H."/>
            <person name="Kravitz S.A."/>
            <person name="Mouchard L."/>
            <person name="Reinert K."/>
            <person name="Remington K.A."/>
            <person name="Clark A.G."/>
            <person name="Waterman M.S."/>
            <person name="Eichler E.E."/>
            <person name="Adams M.D."/>
            <person name="Hunkapiller M.W."/>
            <person name="Myers E.W."/>
            <person name="Venter J.C."/>
        </authorList>
    </citation>
    <scope>NUCLEOTIDE SEQUENCE [LARGE SCALE GENOMIC DNA]</scope>
</reference>
<reference key="4">
    <citation type="journal article" date="2004" name="Genome Res.">
        <title>The status, quality, and expansion of the NIH full-length cDNA project: the Mammalian Gene Collection (MGC).</title>
        <authorList>
            <consortium name="The MGC Project Team"/>
        </authorList>
    </citation>
    <scope>NUCLEOTIDE SEQUENCE [LARGE SCALE MRNA] (ISOFORM 1)</scope>
    <source>
        <tissue>Brain</tissue>
        <tissue>Retinoblastoma</tissue>
    </source>
</reference>
<reference key="5">
    <citation type="journal article" date="2010" name="J. Biol. Chem.">
        <title>Expanding role of the jumonji C domain as an RNA hydroxylase.</title>
        <authorList>
            <person name="Noma A."/>
            <person name="Ishitani R."/>
            <person name="Kato M."/>
            <person name="Nagao A."/>
            <person name="Nureki O."/>
            <person name="Suzuki T."/>
        </authorList>
    </citation>
    <scope>FUNCTION</scope>
    <scope>CATALYTIC ACTIVITY</scope>
    <scope>PATHWAY</scope>
</reference>
<reference key="6">
    <citation type="journal article" date="2011" name="Nucleic Acids Res.">
        <title>Crystal structure of a novel JmjC-domain-containing protein, TYW5, involved in tRNA modification.</title>
        <authorList>
            <person name="Kato M."/>
            <person name="Araiso Y."/>
            <person name="Noma A."/>
            <person name="Nagao A."/>
            <person name="Suzuki T."/>
            <person name="Ishitani R."/>
            <person name="Nureki O."/>
        </authorList>
    </citation>
    <scope>X-RAY CRYSTALLOGRAPHY (2.5 ANGSTROMS) OF 4-311 IN COMPLEX WITH 2-OXOGLUTARATE AND NICKEL ION</scope>
    <scope>FUNCTION</scope>
    <scope>CATALYTIC ACTIVITY</scope>
    <scope>PATHWAY</scope>
    <scope>COFACTOR</scope>
    <scope>SUBUNIT</scope>
    <scope>MUTAGENESIS OF ARG-108 AND ARG-149</scope>
</reference>
<evidence type="ECO:0000255" key="1">
    <source>
        <dbReference type="PROSITE-ProRule" id="PRU00538"/>
    </source>
</evidence>
<evidence type="ECO:0000269" key="2">
    <source>
    </source>
</evidence>
<evidence type="ECO:0000269" key="3">
    <source>
    </source>
</evidence>
<evidence type="ECO:0000303" key="4">
    <source>
    </source>
</evidence>
<evidence type="ECO:0000305" key="5"/>
<evidence type="ECO:0000305" key="6">
    <source>
    </source>
</evidence>
<evidence type="ECO:0007829" key="7">
    <source>
        <dbReference type="PDB" id="3AL5"/>
    </source>
</evidence>
<evidence type="ECO:0007829" key="8">
    <source>
        <dbReference type="PDB" id="3AL6"/>
    </source>
</evidence>
<organism>
    <name type="scientific">Homo sapiens</name>
    <name type="common">Human</name>
    <dbReference type="NCBI Taxonomy" id="9606"/>
    <lineage>
        <taxon>Eukaryota</taxon>
        <taxon>Metazoa</taxon>
        <taxon>Chordata</taxon>
        <taxon>Craniata</taxon>
        <taxon>Vertebrata</taxon>
        <taxon>Euteleostomi</taxon>
        <taxon>Mammalia</taxon>
        <taxon>Eutheria</taxon>
        <taxon>Euarchontoglires</taxon>
        <taxon>Primates</taxon>
        <taxon>Haplorrhini</taxon>
        <taxon>Catarrhini</taxon>
        <taxon>Hominidae</taxon>
        <taxon>Homo</taxon>
    </lineage>
</organism>
<accession>A2RUC4</accession>
<accession>B2RNE3</accession>
<accession>Q8N1R2</accession>
<keyword id="KW-0002">3D-structure</keyword>
<keyword id="KW-0025">Alternative splicing</keyword>
<keyword id="KW-0223">Dioxygenase</keyword>
<keyword id="KW-0408">Iron</keyword>
<keyword id="KW-0479">Metal-binding</keyword>
<keyword id="KW-0560">Oxidoreductase</keyword>
<keyword id="KW-1267">Proteomics identification</keyword>
<keyword id="KW-1185">Reference proteome</keyword>
<keyword id="KW-0819">tRNA processing</keyword>
<protein>
    <recommendedName>
        <fullName evidence="6">tRNA wybutosine-synthesizing protein 5</fullName>
        <shortName>hTYW5</shortName>
        <shortName>tRNA yW-synthesizing protein 5</shortName>
        <ecNumber evidence="2 3">1.14.11.42</ecNumber>
    </recommendedName>
    <alternativeName>
        <fullName>tRNA(Phe) (7-(3-amino-3-carboxypropyl)wyosine(37)-C(2))-hydroxylase</fullName>
    </alternativeName>
</protein>
<comment type="function">
    <text evidence="2 3">tRNA hydroxylase that acts as a component of the wybutosine biosynthesis pathway. Wybutosine is a hyper modified guanosine with a tricyclic base found at the 3'-position adjacent to the anticodon of eukaryotic phenylalanine tRNA. Catalyzes the hydroxylation of 7-(a-amino-a-carboxypropyl)wyosine (yW-72) into undermodified hydroxywybutosine (OHyW*). OHyW* being further transformed into hydroxywybutosine (OHyW) by LCMT2/TYW4. OHyW is a derivative of wybutosine found in higher eukaryotes.</text>
</comment>
<comment type="catalytic activity">
    <reaction evidence="2 3">
        <text>7-[(3S)-3-amino-3-carboxypropyl]wyosine(37) in tRNA(Phe) + 2-oxoglutarate + O2 = 7-(2-hydroxy-3-amino-3-carboxypropyl)wyosine(37) in tRNA(Phe) + succinate + CO2</text>
        <dbReference type="Rhea" id="RHEA:37899"/>
        <dbReference type="Rhea" id="RHEA-COMP:10379"/>
        <dbReference type="Rhea" id="RHEA-COMP:11848"/>
        <dbReference type="ChEBI" id="CHEBI:15379"/>
        <dbReference type="ChEBI" id="CHEBI:16526"/>
        <dbReference type="ChEBI" id="CHEBI:16810"/>
        <dbReference type="ChEBI" id="CHEBI:30031"/>
        <dbReference type="ChEBI" id="CHEBI:73543"/>
        <dbReference type="ChEBI" id="CHEBI:73603"/>
        <dbReference type="EC" id="1.14.11.42"/>
    </reaction>
    <physiologicalReaction direction="left-to-right" evidence="2">
        <dbReference type="Rhea" id="RHEA:37900"/>
    </physiologicalReaction>
</comment>
<comment type="cofactor">
    <cofactor evidence="3">
        <name>Fe(2+)</name>
        <dbReference type="ChEBI" id="CHEBI:29033"/>
    </cofactor>
    <text evidence="3">Binds 1 Fe(2+) ion per subunit.</text>
</comment>
<comment type="pathway">
    <text evidence="2 3">tRNA modification; wybutosine-tRNA(Phe) biosynthesis.</text>
</comment>
<comment type="subunit">
    <text evidence="3">Homodimer.</text>
</comment>
<comment type="interaction">
    <interactant intactId="EBI-21511702">
        <id>A2RUC4</id>
    </interactant>
    <interactant intactId="EBI-6150673">
        <id>A5A3E0</id>
        <label>POTEF</label>
    </interactant>
    <organismsDiffer>false</organismsDiffer>
    <experiments>2</experiments>
</comment>
<comment type="alternative products">
    <event type="alternative splicing"/>
    <isoform>
        <id>A2RUC4-1</id>
        <name>1</name>
        <sequence type="displayed"/>
    </isoform>
    <isoform>
        <id>A2RUC4-2</id>
        <name>2</name>
        <sequence type="described" ref="VSP_029106"/>
    </isoform>
</comment>
<comment type="similarity">
    <text evidence="5">Belongs to the TYW5 family.</text>
</comment>
<comment type="sequence caution" evidence="5">
    <conflict type="erroneous initiation">
        <sequence resource="EMBL-CDS" id="AAH63502"/>
    </conflict>
    <text>Truncated N-terminus.</text>
</comment>